<dbReference type="EC" id="2.1.1.199" evidence="1"/>
<dbReference type="EMBL" id="AP006841">
    <property type="protein sequence ID" value="BAD47062.1"/>
    <property type="molecule type" value="Genomic_DNA"/>
</dbReference>
<dbReference type="RefSeq" id="WP_005784016.1">
    <property type="nucleotide sequence ID" value="NZ_UYXF01000014.1"/>
</dbReference>
<dbReference type="RefSeq" id="YP_097596.1">
    <property type="nucleotide sequence ID" value="NC_006347.1"/>
</dbReference>
<dbReference type="SMR" id="Q64ZL4"/>
<dbReference type="STRING" id="295405.BF0313"/>
<dbReference type="KEGG" id="bfr:BF0313"/>
<dbReference type="PATRIC" id="fig|295405.11.peg.336"/>
<dbReference type="HOGENOM" id="CLU_038422_2_0_10"/>
<dbReference type="OrthoDB" id="9806637at2"/>
<dbReference type="Proteomes" id="UP000002197">
    <property type="component" value="Chromosome"/>
</dbReference>
<dbReference type="GO" id="GO:0005737">
    <property type="term" value="C:cytoplasm"/>
    <property type="evidence" value="ECO:0007669"/>
    <property type="project" value="UniProtKB-SubCell"/>
</dbReference>
<dbReference type="GO" id="GO:0071424">
    <property type="term" value="F:rRNA (cytosine-N4-)-methyltransferase activity"/>
    <property type="evidence" value="ECO:0007669"/>
    <property type="project" value="UniProtKB-UniRule"/>
</dbReference>
<dbReference type="GO" id="GO:0070475">
    <property type="term" value="P:rRNA base methylation"/>
    <property type="evidence" value="ECO:0007669"/>
    <property type="project" value="UniProtKB-UniRule"/>
</dbReference>
<dbReference type="FunFam" id="1.10.150.170:FF:000003">
    <property type="entry name" value="Ribosomal RNA small subunit methyltransferase H"/>
    <property type="match status" value="1"/>
</dbReference>
<dbReference type="Gene3D" id="1.10.150.170">
    <property type="entry name" value="Putative methyltransferase TM0872, insert domain"/>
    <property type="match status" value="1"/>
</dbReference>
<dbReference type="Gene3D" id="3.40.50.150">
    <property type="entry name" value="Vaccinia Virus protein VP39"/>
    <property type="match status" value="1"/>
</dbReference>
<dbReference type="HAMAP" id="MF_01007">
    <property type="entry name" value="16SrRNA_methyltr_H"/>
    <property type="match status" value="1"/>
</dbReference>
<dbReference type="InterPro" id="IPR002903">
    <property type="entry name" value="RsmH"/>
</dbReference>
<dbReference type="InterPro" id="IPR023397">
    <property type="entry name" value="SAM-dep_MeTrfase_MraW_recog"/>
</dbReference>
<dbReference type="InterPro" id="IPR029063">
    <property type="entry name" value="SAM-dependent_MTases_sf"/>
</dbReference>
<dbReference type="NCBIfam" id="TIGR00006">
    <property type="entry name" value="16S rRNA (cytosine(1402)-N(4))-methyltransferase RsmH"/>
    <property type="match status" value="1"/>
</dbReference>
<dbReference type="PANTHER" id="PTHR11265:SF0">
    <property type="entry name" value="12S RRNA N4-METHYLCYTIDINE METHYLTRANSFERASE"/>
    <property type="match status" value="1"/>
</dbReference>
<dbReference type="PANTHER" id="PTHR11265">
    <property type="entry name" value="S-ADENOSYL-METHYLTRANSFERASE MRAW"/>
    <property type="match status" value="1"/>
</dbReference>
<dbReference type="Pfam" id="PF01795">
    <property type="entry name" value="Methyltransf_5"/>
    <property type="match status" value="1"/>
</dbReference>
<dbReference type="PIRSF" id="PIRSF004486">
    <property type="entry name" value="MraW"/>
    <property type="match status" value="1"/>
</dbReference>
<dbReference type="SUPFAM" id="SSF81799">
    <property type="entry name" value="Putative methyltransferase TM0872, insert domain"/>
    <property type="match status" value="1"/>
</dbReference>
<dbReference type="SUPFAM" id="SSF53335">
    <property type="entry name" value="S-adenosyl-L-methionine-dependent methyltransferases"/>
    <property type="match status" value="1"/>
</dbReference>
<organism>
    <name type="scientific">Bacteroides fragilis (strain YCH46)</name>
    <dbReference type="NCBI Taxonomy" id="295405"/>
    <lineage>
        <taxon>Bacteria</taxon>
        <taxon>Pseudomonadati</taxon>
        <taxon>Bacteroidota</taxon>
        <taxon>Bacteroidia</taxon>
        <taxon>Bacteroidales</taxon>
        <taxon>Bacteroidaceae</taxon>
        <taxon>Bacteroides</taxon>
    </lineage>
</organism>
<protein>
    <recommendedName>
        <fullName evidence="1">Ribosomal RNA small subunit methyltransferase H</fullName>
        <ecNumber evidence="1">2.1.1.199</ecNumber>
    </recommendedName>
    <alternativeName>
        <fullName evidence="1">16S rRNA m(4)C1402 methyltransferase</fullName>
    </alternativeName>
    <alternativeName>
        <fullName evidence="1">rRNA (cytosine-N(4)-)-methyltransferase RsmH</fullName>
    </alternativeName>
</protein>
<reference key="1">
    <citation type="journal article" date="2004" name="Proc. Natl. Acad. Sci. U.S.A.">
        <title>Genomic analysis of Bacteroides fragilis reveals extensive DNA inversions regulating cell surface adaptation.</title>
        <authorList>
            <person name="Kuwahara T."/>
            <person name="Yamashita A."/>
            <person name="Hirakawa H."/>
            <person name="Nakayama H."/>
            <person name="Toh H."/>
            <person name="Okada N."/>
            <person name="Kuhara S."/>
            <person name="Hattori M."/>
            <person name="Hayashi T."/>
            <person name="Ohnishi Y."/>
        </authorList>
    </citation>
    <scope>NUCLEOTIDE SEQUENCE [LARGE SCALE GENOMIC DNA]</scope>
    <source>
        <strain>YCH46</strain>
    </source>
</reference>
<sequence length="304" mass="34633">MKEEETTYHVPVLLKESVDAMNISPDGTYVDVTFGGGGHSREILSRLGDGGRLLGFDQDEDAERNIVNDPHFTFVRSNFRYLHNFLRYHDIGEVDAILADLGVSSHHFDDSERGFSFRFDGKLDMRMNKRAGITAADVVNTYEEERLADIFYLYGELKNSRKLASVIVKARTGQKIETIGEFLEIIKPLFGREREKKELAKVFQALRIEVNQEMEALKEMLMAATEALKPGGRLVVITYHSLEDRMVKNIMKTGNVEGKATQDFFGNLQTPFRLVNNKVIVPDEDEITRNPRSRSAKLRIAEKK</sequence>
<accession>Q64ZL4</accession>
<proteinExistence type="inferred from homology"/>
<keyword id="KW-0963">Cytoplasm</keyword>
<keyword id="KW-0489">Methyltransferase</keyword>
<keyword id="KW-0698">rRNA processing</keyword>
<keyword id="KW-0949">S-adenosyl-L-methionine</keyword>
<keyword id="KW-0808">Transferase</keyword>
<name>RSMH_BACFR</name>
<feature type="chain" id="PRO_0000108573" description="Ribosomal RNA small subunit methyltransferase H">
    <location>
        <begin position="1"/>
        <end position="304"/>
    </location>
</feature>
<feature type="binding site" evidence="1">
    <location>
        <begin position="37"/>
        <end position="39"/>
    </location>
    <ligand>
        <name>S-adenosyl-L-methionine</name>
        <dbReference type="ChEBI" id="CHEBI:59789"/>
    </ligand>
</feature>
<feature type="binding site" evidence="1">
    <location>
        <position position="57"/>
    </location>
    <ligand>
        <name>S-adenosyl-L-methionine</name>
        <dbReference type="ChEBI" id="CHEBI:59789"/>
    </ligand>
</feature>
<feature type="binding site" evidence="1">
    <location>
        <position position="79"/>
    </location>
    <ligand>
        <name>S-adenosyl-L-methionine</name>
        <dbReference type="ChEBI" id="CHEBI:59789"/>
    </ligand>
</feature>
<feature type="binding site" evidence="1">
    <location>
        <position position="100"/>
    </location>
    <ligand>
        <name>S-adenosyl-L-methionine</name>
        <dbReference type="ChEBI" id="CHEBI:59789"/>
    </ligand>
</feature>
<feature type="binding site" evidence="1">
    <location>
        <position position="107"/>
    </location>
    <ligand>
        <name>S-adenosyl-L-methionine</name>
        <dbReference type="ChEBI" id="CHEBI:59789"/>
    </ligand>
</feature>
<evidence type="ECO:0000255" key="1">
    <source>
        <dbReference type="HAMAP-Rule" id="MF_01007"/>
    </source>
</evidence>
<comment type="function">
    <text evidence="1">Specifically methylates the N4 position of cytidine in position 1402 (C1402) of 16S rRNA.</text>
</comment>
<comment type="catalytic activity">
    <reaction evidence="1">
        <text>cytidine(1402) in 16S rRNA + S-adenosyl-L-methionine = N(4)-methylcytidine(1402) in 16S rRNA + S-adenosyl-L-homocysteine + H(+)</text>
        <dbReference type="Rhea" id="RHEA:42928"/>
        <dbReference type="Rhea" id="RHEA-COMP:10286"/>
        <dbReference type="Rhea" id="RHEA-COMP:10287"/>
        <dbReference type="ChEBI" id="CHEBI:15378"/>
        <dbReference type="ChEBI" id="CHEBI:57856"/>
        <dbReference type="ChEBI" id="CHEBI:59789"/>
        <dbReference type="ChEBI" id="CHEBI:74506"/>
        <dbReference type="ChEBI" id="CHEBI:82748"/>
        <dbReference type="EC" id="2.1.1.199"/>
    </reaction>
</comment>
<comment type="subcellular location">
    <subcellularLocation>
        <location evidence="1">Cytoplasm</location>
    </subcellularLocation>
</comment>
<comment type="similarity">
    <text evidence="1">Belongs to the methyltransferase superfamily. RsmH family.</text>
</comment>
<gene>
    <name evidence="1" type="primary">rsmH</name>
    <name type="synonym">mraW</name>
    <name type="ordered locus">BF0313</name>
</gene>